<feature type="signal peptide" evidence="2">
    <location>
        <begin position="1"/>
        <end position="19"/>
    </location>
</feature>
<feature type="propeptide" id="PRO_0000433648" evidence="9">
    <location>
        <begin position="20"/>
        <end position="31"/>
    </location>
</feature>
<feature type="chain" id="PRO_0000433649" description="Kappa-actitoxin-Avd4a" evidence="4">
    <location>
        <begin position="34"/>
        <end position="76"/>
    </location>
</feature>
<feature type="disulfide bond" evidence="1">
    <location>
        <begin position="37"/>
        <end position="72"/>
    </location>
</feature>
<feature type="disulfide bond" evidence="1">
    <location>
        <begin position="39"/>
        <end position="65"/>
    </location>
</feature>
<feature type="disulfide bond" evidence="1">
    <location>
        <begin position="55"/>
        <end position="73"/>
    </location>
</feature>
<reference key="1">
    <citation type="journal article" date="2009" name="BMC Genomics">
        <title>Comprehensive EST analysis of the symbiotic sea anemone, Anemonia viridis.</title>
        <authorList>
            <person name="Sabourault C."/>
            <person name="Ganot P."/>
            <person name="Deleury E."/>
            <person name="Allemand D."/>
            <person name="Furla P."/>
        </authorList>
    </citation>
    <scope>NUCLEOTIDE SEQUENCE [MRNA]</scope>
</reference>
<reference key="2">
    <citation type="journal article" date="2018" name="Mar. Drugs">
        <title>A low molecular weight protein from the sea anemone anemonia viridis with an anti-angiogenic activity.</title>
        <authorList>
            <person name="Loret E.P."/>
            <person name="Luis J."/>
            <person name="Nuccio C."/>
            <person name="Villard C."/>
            <person name="Mansuelle P."/>
            <person name="Lebrun R."/>
            <person name="Villard P.H."/>
        </authorList>
    </citation>
    <scope>PROTEIN SEQUENCE OF 34-76</scope>
    <scope>MASS SPECTROMETRY</scope>
</reference>
<reference key="3">
    <citation type="journal article" date="2011" name="BMC Genomics">
        <title>The mining of toxin-like polypeptides from EST database by single residue distribution analysis.</title>
        <authorList>
            <person name="Kozlov S."/>
            <person name="Grishin E."/>
        </authorList>
    </citation>
    <scope>NOMENCLATURE</scope>
</reference>
<reference key="4">
    <citation type="journal article" date="2012" name="Toxicon">
        <title>Development of a rational nomenclature for naming peptide and protein toxins from sea anemones.</title>
        <authorList>
            <person name="Oliveira J.S."/>
            <person name="Fuentes-Silva D."/>
            <person name="King G.F."/>
        </authorList>
    </citation>
    <scope>NOMENCLATURE</scope>
</reference>
<reference key="5">
    <citation type="journal article" date="2013" name="Mar. Drugs">
        <title>Evidence of accelerated evolution and ectodermal-specific expression of presumptive BDS toxin cDNAs from Anemonia viridis.</title>
        <authorList>
            <person name="Nicosia A."/>
            <person name="Maggio T."/>
            <person name="Mazzola S."/>
            <person name="Cuttitta A."/>
        </authorList>
    </citation>
    <scope>3D-STRUCTURE MODELING</scope>
    <scope>TISSUE SPECIFICITY</scope>
</reference>
<proteinExistence type="evidence at protein level"/>
<evidence type="ECO:0000250" key="1">
    <source>
        <dbReference type="UniProtKB" id="P11494"/>
    </source>
</evidence>
<evidence type="ECO:0000255" key="2"/>
<evidence type="ECO:0000269" key="3">
    <source>
    </source>
</evidence>
<evidence type="ECO:0000269" key="4">
    <source>
    </source>
</evidence>
<evidence type="ECO:0000303" key="5">
    <source>
    </source>
</evidence>
<evidence type="ECO:0000303" key="6">
    <source>
    </source>
</evidence>
<evidence type="ECO:0000305" key="7"/>
<evidence type="ECO:0000305" key="8">
    <source>
    </source>
</evidence>
<evidence type="ECO:0000305" key="9">
    <source>
    </source>
</evidence>
<protein>
    <recommendedName>
        <fullName evidence="6">Kappa-actitoxin-Avd4a</fullName>
        <shortName evidence="6">Kappa-AITX-Avd4a</shortName>
    </recommendedName>
    <alternativeName>
        <fullName evidence="7">Antihypertensive protein BDS-1</fullName>
    </alternativeName>
    <alternativeName>
        <fullName evidence="5">Blood depressing substance 1</fullName>
        <shortName evidence="5">BDS-1</shortName>
    </alternativeName>
</protein>
<comment type="function">
    <text evidence="1">Acts as a gating modifier on both Kv and Nav ion channels, and also acts on blood pressure (By similarity). Voltage-dependently inhibits voltage-gated potassium channels Kv3 (Kv3.1/KCNC1, Kv3.2/KCNC2 and Kv3.4/KCNC4) and slows inactivation of the voltage-gated sodium channel Nav1.7/SCN9A (By similarity). Inhibits all Kv3.1, Kv3.2 and Kv3.4 by about 50% when tested at a voltage of +40 mV (45%, 48% and 56%, respectively) (By similarity). May act by binding residues in voltage-sensing domains S3b and S4 of Kv3 (By similarity). On sodium channels, tests have been done on human Nav1.7/SCN9A (expressed in HEK293 cells) (EC(50)=3 nM) and rat SCG neurons that mostly carry Nav1.7 channels (EC(50)=300 nM) (By similarity). This toxin also reduces blood pressure (By similarity).</text>
</comment>
<comment type="subcellular location">
    <subcellularLocation>
        <location evidence="7">Secreted</location>
    </subcellularLocation>
    <subcellularLocation>
        <location evidence="7">Nematocyst</location>
    </subcellularLocation>
</comment>
<comment type="tissue specificity">
    <text evidence="3">Highly expressed in the ectodermal tissue from the distal and proximal tentacles, body wall, and oral disk.</text>
</comment>
<comment type="mass spectrometry" mass="4708.0" method="MALDI" evidence="4"/>
<comment type="miscellaneous">
    <text evidence="8">Is the most represented component of the BDS family in A.viridis.</text>
</comment>
<comment type="miscellaneous">
    <text evidence="7">This protein sequence is identical to BDS-1 from A.sulcata (AC P11494).</text>
</comment>
<comment type="similarity">
    <text evidence="7">Belongs to the sea anemone type 3 (BDS) potassium channel toxin family.</text>
</comment>
<comment type="caution">
    <text evidence="7">Opinions are divided on whether Anemonia viridis (Forsskal, 1775) and Anemonia sulcata (Pennant, 1777) are separate species.</text>
</comment>
<accession>P0DMX6</accession>
<sequence length="76" mass="8343">MNKALFLCLVVLCAAVVFAAEDLQKAKHAPFKRAAPCFCSGKPGRGDLWILRGTCPGGYGYTSNCYKWPNICCYPH</sequence>
<name>BDS1_ANEVI</name>
<keyword id="KW-0165">Cleavage on pair of basic residues</keyword>
<keyword id="KW-0903">Direct protein sequencing</keyword>
<keyword id="KW-1015">Disulfide bond</keyword>
<keyword id="KW-0382">Hypotensive agent</keyword>
<keyword id="KW-0872">Ion channel impairing toxin</keyword>
<keyword id="KW-0166">Nematocyst</keyword>
<keyword id="KW-0528">Neurotoxin</keyword>
<keyword id="KW-0632">Potassium channel impairing toxin</keyword>
<keyword id="KW-0964">Secreted</keyword>
<keyword id="KW-0732">Signal</keyword>
<keyword id="KW-0800">Toxin</keyword>
<keyword id="KW-1220">Voltage-gated potassium channel impairing toxin</keyword>
<dbReference type="EMBL" id="FK728690">
    <property type="status" value="NOT_ANNOTATED_CDS"/>
    <property type="molecule type" value="mRNA"/>
</dbReference>
<dbReference type="EMBL" id="FK727245">
    <property type="status" value="NOT_ANNOTATED_CDS"/>
    <property type="molecule type" value="mRNA"/>
</dbReference>
<dbReference type="EMBL" id="FK731753">
    <property type="status" value="NOT_ANNOTATED_CDS"/>
    <property type="molecule type" value="mRNA"/>
</dbReference>
<dbReference type="EMBL" id="FK734674">
    <property type="status" value="NOT_ANNOTATED_CDS"/>
    <property type="molecule type" value="mRNA"/>
</dbReference>
<dbReference type="EMBL" id="FK756071">
    <property type="status" value="NOT_ANNOTATED_CDS"/>
    <property type="molecule type" value="mRNA"/>
</dbReference>
<dbReference type="EMBL" id="FK756154">
    <property type="status" value="NOT_ANNOTATED_CDS"/>
    <property type="molecule type" value="mRNA"/>
</dbReference>
<dbReference type="EMBL" id="FK737141">
    <property type="status" value="NOT_ANNOTATED_CDS"/>
    <property type="molecule type" value="mRNA"/>
</dbReference>
<dbReference type="EMBL" id="FK733420">
    <property type="status" value="NOT_ANNOTATED_CDS"/>
    <property type="molecule type" value="mRNA"/>
</dbReference>
<dbReference type="EMBL" id="FK754388">
    <property type="status" value="NOT_ANNOTATED_CDS"/>
    <property type="molecule type" value="mRNA"/>
</dbReference>
<dbReference type="EMBL" id="FK721790">
    <property type="status" value="NOT_ANNOTATED_CDS"/>
    <property type="molecule type" value="mRNA"/>
</dbReference>
<dbReference type="EMBL" id="FK755366">
    <property type="status" value="NOT_ANNOTATED_CDS"/>
    <property type="molecule type" value="mRNA"/>
</dbReference>
<dbReference type="EMBL" id="FK745427">
    <property type="status" value="NOT_ANNOTATED_CDS"/>
    <property type="molecule type" value="mRNA"/>
</dbReference>
<dbReference type="EMBL" id="FK727043">
    <property type="status" value="NOT_ANNOTATED_CDS"/>
    <property type="molecule type" value="mRNA"/>
</dbReference>
<dbReference type="EMBL" id="FK752129">
    <property type="status" value="NOT_ANNOTATED_CDS"/>
    <property type="molecule type" value="mRNA"/>
</dbReference>
<dbReference type="SMR" id="P0DMX6"/>
<dbReference type="GO" id="GO:0005576">
    <property type="term" value="C:extracellular region"/>
    <property type="evidence" value="ECO:0007669"/>
    <property type="project" value="UniProtKB-SubCell"/>
</dbReference>
<dbReference type="GO" id="GO:0042151">
    <property type="term" value="C:nematocyst"/>
    <property type="evidence" value="ECO:0007669"/>
    <property type="project" value="UniProtKB-SubCell"/>
</dbReference>
<dbReference type="GO" id="GO:0008200">
    <property type="term" value="F:ion channel inhibitor activity"/>
    <property type="evidence" value="ECO:0007669"/>
    <property type="project" value="InterPro"/>
</dbReference>
<dbReference type="GO" id="GO:0015459">
    <property type="term" value="F:potassium channel regulator activity"/>
    <property type="evidence" value="ECO:0007669"/>
    <property type="project" value="UniProtKB-KW"/>
</dbReference>
<dbReference type="GO" id="GO:0090729">
    <property type="term" value="F:toxin activity"/>
    <property type="evidence" value="ECO:0007669"/>
    <property type="project" value="UniProtKB-KW"/>
</dbReference>
<dbReference type="GO" id="GO:0008217">
    <property type="term" value="P:regulation of blood pressure"/>
    <property type="evidence" value="ECO:0007669"/>
    <property type="project" value="UniProtKB-KW"/>
</dbReference>
<dbReference type="Gene3D" id="2.20.20.10">
    <property type="entry name" value="Anthopleurin-A"/>
    <property type="match status" value="1"/>
</dbReference>
<dbReference type="InterPro" id="IPR012414">
    <property type="entry name" value="BDS_K_chnl_tox"/>
</dbReference>
<dbReference type="InterPro" id="IPR023355">
    <property type="entry name" value="Myo_ane_neurotoxin_sf"/>
</dbReference>
<dbReference type="Pfam" id="PF07936">
    <property type="entry name" value="Defensin_4"/>
    <property type="match status" value="1"/>
</dbReference>
<dbReference type="SUPFAM" id="SSF57392">
    <property type="entry name" value="Defensin-like"/>
    <property type="match status" value="1"/>
</dbReference>
<organism>
    <name type="scientific">Anemonia viridis</name>
    <name type="common">Snakelocks anemone</name>
    <dbReference type="NCBI Taxonomy" id="51769"/>
    <lineage>
        <taxon>Eukaryota</taxon>
        <taxon>Metazoa</taxon>
        <taxon>Cnidaria</taxon>
        <taxon>Anthozoa</taxon>
        <taxon>Hexacorallia</taxon>
        <taxon>Actiniaria</taxon>
        <taxon>Actiniidae</taxon>
        <taxon>Anemonia</taxon>
    </lineage>
</organism>